<reference key="1">
    <citation type="journal article" date="2003" name="FEBS Lett.">
        <title>Identification of a new expanding family of genes characterized by atypical LRR domains. Localization of a cluster preferentially expressed in oocyte.</title>
        <authorList>
            <person name="Dade S."/>
            <person name="Callebaut I."/>
            <person name="Mermillod P."/>
            <person name="Monget P."/>
        </authorList>
    </citation>
    <scope>NUCLEOTIDE SEQUENCE [MRNA] (ISOFORM 2)</scope>
    <scope>IDENTIFICATION OF LRR REPEATS</scope>
    <scope>TISSUE SPECIFICITY</scope>
    <source>
        <strain>C57BL/6 X 129</strain>
    </source>
</reference>
<reference key="2">
    <citation type="journal article" date="2005" name="Science">
        <title>The transcriptional landscape of the mammalian genome.</title>
        <authorList>
            <person name="Carninci P."/>
            <person name="Kasukawa T."/>
            <person name="Katayama S."/>
            <person name="Gough J."/>
            <person name="Frith M.C."/>
            <person name="Maeda N."/>
            <person name="Oyama R."/>
            <person name="Ravasi T."/>
            <person name="Lenhard B."/>
            <person name="Wells C."/>
            <person name="Kodzius R."/>
            <person name="Shimokawa K."/>
            <person name="Bajic V.B."/>
            <person name="Brenner S.E."/>
            <person name="Batalov S."/>
            <person name="Forrest A.R."/>
            <person name="Zavolan M."/>
            <person name="Davis M.J."/>
            <person name="Wilming L.G."/>
            <person name="Aidinis V."/>
            <person name="Allen J.E."/>
            <person name="Ambesi-Impiombato A."/>
            <person name="Apweiler R."/>
            <person name="Aturaliya R.N."/>
            <person name="Bailey T.L."/>
            <person name="Bansal M."/>
            <person name="Baxter L."/>
            <person name="Beisel K.W."/>
            <person name="Bersano T."/>
            <person name="Bono H."/>
            <person name="Chalk A.M."/>
            <person name="Chiu K.P."/>
            <person name="Choudhary V."/>
            <person name="Christoffels A."/>
            <person name="Clutterbuck D.R."/>
            <person name="Crowe M.L."/>
            <person name="Dalla E."/>
            <person name="Dalrymple B.P."/>
            <person name="de Bono B."/>
            <person name="Della Gatta G."/>
            <person name="di Bernardo D."/>
            <person name="Down T."/>
            <person name="Engstrom P."/>
            <person name="Fagiolini M."/>
            <person name="Faulkner G."/>
            <person name="Fletcher C.F."/>
            <person name="Fukushima T."/>
            <person name="Furuno M."/>
            <person name="Futaki S."/>
            <person name="Gariboldi M."/>
            <person name="Georgii-Hemming P."/>
            <person name="Gingeras T.R."/>
            <person name="Gojobori T."/>
            <person name="Green R.E."/>
            <person name="Gustincich S."/>
            <person name="Harbers M."/>
            <person name="Hayashi Y."/>
            <person name="Hensch T.K."/>
            <person name="Hirokawa N."/>
            <person name="Hill D."/>
            <person name="Huminiecki L."/>
            <person name="Iacono M."/>
            <person name="Ikeo K."/>
            <person name="Iwama A."/>
            <person name="Ishikawa T."/>
            <person name="Jakt M."/>
            <person name="Kanapin A."/>
            <person name="Katoh M."/>
            <person name="Kawasawa Y."/>
            <person name="Kelso J."/>
            <person name="Kitamura H."/>
            <person name="Kitano H."/>
            <person name="Kollias G."/>
            <person name="Krishnan S.P."/>
            <person name="Kruger A."/>
            <person name="Kummerfeld S.K."/>
            <person name="Kurochkin I.V."/>
            <person name="Lareau L.F."/>
            <person name="Lazarevic D."/>
            <person name="Lipovich L."/>
            <person name="Liu J."/>
            <person name="Liuni S."/>
            <person name="McWilliam S."/>
            <person name="Madan Babu M."/>
            <person name="Madera M."/>
            <person name="Marchionni L."/>
            <person name="Matsuda H."/>
            <person name="Matsuzawa S."/>
            <person name="Miki H."/>
            <person name="Mignone F."/>
            <person name="Miyake S."/>
            <person name="Morris K."/>
            <person name="Mottagui-Tabar S."/>
            <person name="Mulder N."/>
            <person name="Nakano N."/>
            <person name="Nakauchi H."/>
            <person name="Ng P."/>
            <person name="Nilsson R."/>
            <person name="Nishiguchi S."/>
            <person name="Nishikawa S."/>
            <person name="Nori F."/>
            <person name="Ohara O."/>
            <person name="Okazaki Y."/>
            <person name="Orlando V."/>
            <person name="Pang K.C."/>
            <person name="Pavan W.J."/>
            <person name="Pavesi G."/>
            <person name="Pesole G."/>
            <person name="Petrovsky N."/>
            <person name="Piazza S."/>
            <person name="Reed J."/>
            <person name="Reid J.F."/>
            <person name="Ring B.Z."/>
            <person name="Ringwald M."/>
            <person name="Rost B."/>
            <person name="Ruan Y."/>
            <person name="Salzberg S.L."/>
            <person name="Sandelin A."/>
            <person name="Schneider C."/>
            <person name="Schoenbach C."/>
            <person name="Sekiguchi K."/>
            <person name="Semple C.A."/>
            <person name="Seno S."/>
            <person name="Sessa L."/>
            <person name="Sheng Y."/>
            <person name="Shibata Y."/>
            <person name="Shimada H."/>
            <person name="Shimada K."/>
            <person name="Silva D."/>
            <person name="Sinclair B."/>
            <person name="Sperling S."/>
            <person name="Stupka E."/>
            <person name="Sugiura K."/>
            <person name="Sultana R."/>
            <person name="Takenaka Y."/>
            <person name="Taki K."/>
            <person name="Tammoja K."/>
            <person name="Tan S.L."/>
            <person name="Tang S."/>
            <person name="Taylor M.S."/>
            <person name="Tegner J."/>
            <person name="Teichmann S.A."/>
            <person name="Ueda H.R."/>
            <person name="van Nimwegen E."/>
            <person name="Verardo R."/>
            <person name="Wei C.L."/>
            <person name="Yagi K."/>
            <person name="Yamanishi H."/>
            <person name="Zabarovsky E."/>
            <person name="Zhu S."/>
            <person name="Zimmer A."/>
            <person name="Hide W."/>
            <person name="Bult C."/>
            <person name="Grimmond S.M."/>
            <person name="Teasdale R.D."/>
            <person name="Liu E.T."/>
            <person name="Brusic V."/>
            <person name="Quackenbush J."/>
            <person name="Wahlestedt C."/>
            <person name="Mattick J.S."/>
            <person name="Hume D.A."/>
            <person name="Kai C."/>
            <person name="Sasaki D."/>
            <person name="Tomaru Y."/>
            <person name="Fukuda S."/>
            <person name="Kanamori-Katayama M."/>
            <person name="Suzuki M."/>
            <person name="Aoki J."/>
            <person name="Arakawa T."/>
            <person name="Iida J."/>
            <person name="Imamura K."/>
            <person name="Itoh M."/>
            <person name="Kato T."/>
            <person name="Kawaji H."/>
            <person name="Kawagashira N."/>
            <person name="Kawashima T."/>
            <person name="Kojima M."/>
            <person name="Kondo S."/>
            <person name="Konno H."/>
            <person name="Nakano K."/>
            <person name="Ninomiya N."/>
            <person name="Nishio T."/>
            <person name="Okada M."/>
            <person name="Plessy C."/>
            <person name="Shibata K."/>
            <person name="Shiraki T."/>
            <person name="Suzuki S."/>
            <person name="Tagami M."/>
            <person name="Waki K."/>
            <person name="Watahiki A."/>
            <person name="Okamura-Oho Y."/>
            <person name="Suzuki H."/>
            <person name="Kawai J."/>
            <person name="Hayashizaki Y."/>
        </authorList>
    </citation>
    <scope>NUCLEOTIDE SEQUENCE [LARGE SCALE MRNA] (ISOFORM 1)</scope>
</reference>
<reference key="3">
    <citation type="journal article" date="2009" name="PLoS Biol.">
        <title>Lineage-specific biology revealed by a finished genome assembly of the mouse.</title>
        <authorList>
            <person name="Church D.M."/>
            <person name="Goodstadt L."/>
            <person name="Hillier L.W."/>
            <person name="Zody M.C."/>
            <person name="Goldstein S."/>
            <person name="She X."/>
            <person name="Bult C.J."/>
            <person name="Agarwala R."/>
            <person name="Cherry J.L."/>
            <person name="DiCuccio M."/>
            <person name="Hlavina W."/>
            <person name="Kapustin Y."/>
            <person name="Meric P."/>
            <person name="Maglott D."/>
            <person name="Birtle Z."/>
            <person name="Marques A.C."/>
            <person name="Graves T."/>
            <person name="Zhou S."/>
            <person name="Teague B."/>
            <person name="Potamousis K."/>
            <person name="Churas C."/>
            <person name="Place M."/>
            <person name="Herschleb J."/>
            <person name="Runnheim R."/>
            <person name="Forrest D."/>
            <person name="Amos-Landgraf J."/>
            <person name="Schwartz D.C."/>
            <person name="Cheng Z."/>
            <person name="Lindblad-Toh K."/>
            <person name="Eichler E.E."/>
            <person name="Ponting C.P."/>
        </authorList>
    </citation>
    <scope>NUCLEOTIDE SEQUENCE [LARGE SCALE GENOMIC DNA]</scope>
    <source>
        <strain>C57BL/6J</strain>
    </source>
</reference>
<reference key="4">
    <citation type="journal article" date="2004" name="Genome Res.">
        <title>The status, quality, and expansion of the NIH full-length cDNA project: the Mammalian Gene Collection (MGC).</title>
        <authorList>
            <consortium name="The MGC Project Team"/>
        </authorList>
    </citation>
    <scope>NUCLEOTIDE SEQUENCE [LARGE SCALE MRNA] (ISOFORM 2)</scope>
    <source>
        <strain>C57BL/6J</strain>
        <tissue>Egg</tissue>
    </source>
</reference>
<name>OOG3_MOUSE</name>
<dbReference type="EMBL" id="AY573563">
    <property type="protein sequence ID" value="AAS99141.1"/>
    <property type="molecule type" value="mRNA"/>
</dbReference>
<dbReference type="EMBL" id="AK136030">
    <property type="protein sequence ID" value="BAE22783.1"/>
    <property type="molecule type" value="mRNA"/>
</dbReference>
<dbReference type="EMBL" id="AL627131">
    <property type="status" value="NOT_ANNOTATED_CDS"/>
    <property type="molecule type" value="Genomic_DNA"/>
</dbReference>
<dbReference type="EMBL" id="BC053700">
    <property type="protein sequence ID" value="AAH53700.1"/>
    <property type="molecule type" value="mRNA"/>
</dbReference>
<dbReference type="CCDS" id="CCDS51361.1">
    <molecule id="Q3UWY1-1"/>
</dbReference>
<dbReference type="RefSeq" id="NP_957710.2">
    <molecule id="Q3UWY1-1"/>
    <property type="nucleotide sequence ID" value="NM_201258.2"/>
</dbReference>
<dbReference type="SMR" id="Q3UWY1"/>
<dbReference type="FunCoup" id="Q3UWY1">
    <property type="interactions" value="21"/>
</dbReference>
<dbReference type="STRING" id="10090.ENSMUSP00000059834"/>
<dbReference type="PhosphoSitePlus" id="Q3UWY1"/>
<dbReference type="PaxDb" id="10090-ENSMUSP00000059834"/>
<dbReference type="Ensembl" id="ENSMUST00000050933.9">
    <molecule id="Q3UWY1-1"/>
    <property type="protein sequence ID" value="ENSMUSP00000059834.9"/>
    <property type="gene ID" value="ENSMUSG00000050810.9"/>
</dbReference>
<dbReference type="GeneID" id="100012"/>
<dbReference type="KEGG" id="mmu:100012"/>
<dbReference type="UCSC" id="uc008vqx.2">
    <molecule id="Q3UWY1-1"/>
    <property type="organism name" value="mouse"/>
</dbReference>
<dbReference type="AGR" id="MGI:2684047"/>
<dbReference type="CTD" id="100012"/>
<dbReference type="MGI" id="MGI:2684047">
    <property type="gene designation" value="Oog3"/>
</dbReference>
<dbReference type="VEuPathDB" id="HostDB:ENSMUSG00000050810"/>
<dbReference type="eggNOG" id="ENOG502QWSJ">
    <property type="taxonomic scope" value="Eukaryota"/>
</dbReference>
<dbReference type="GeneTree" id="ENSGT01030000234531"/>
<dbReference type="HOGENOM" id="CLU_039635_2_1_1"/>
<dbReference type="InParanoid" id="Q3UWY1"/>
<dbReference type="OMA" id="VSFWENE"/>
<dbReference type="OrthoDB" id="9629918at2759"/>
<dbReference type="PhylomeDB" id="Q3UWY1"/>
<dbReference type="TreeFam" id="TF332708"/>
<dbReference type="BioGRID-ORCS" id="100012">
    <property type="hits" value="0 hits in 75 CRISPR screens"/>
</dbReference>
<dbReference type="ChiTaRS" id="Oog3">
    <property type="organism name" value="mouse"/>
</dbReference>
<dbReference type="PRO" id="PR:Q3UWY1"/>
<dbReference type="Proteomes" id="UP000000589">
    <property type="component" value="Chromosome 4"/>
</dbReference>
<dbReference type="RNAct" id="Q3UWY1">
    <property type="molecule type" value="protein"/>
</dbReference>
<dbReference type="Bgee" id="ENSMUSG00000050810">
    <property type="expression patterns" value="Expressed in primary oocyte and 7 other cell types or tissues"/>
</dbReference>
<dbReference type="GO" id="GO:0043066">
    <property type="term" value="P:negative regulation of apoptotic process"/>
    <property type="evidence" value="ECO:0007669"/>
    <property type="project" value="InterPro"/>
</dbReference>
<dbReference type="GO" id="GO:0045596">
    <property type="term" value="P:negative regulation of cell differentiation"/>
    <property type="evidence" value="ECO:0007669"/>
    <property type="project" value="InterPro"/>
</dbReference>
<dbReference type="GO" id="GO:0045892">
    <property type="term" value="P:negative regulation of DNA-templated transcription"/>
    <property type="evidence" value="ECO:0007669"/>
    <property type="project" value="InterPro"/>
</dbReference>
<dbReference type="GO" id="GO:0008284">
    <property type="term" value="P:positive regulation of cell population proliferation"/>
    <property type="evidence" value="ECO:0007669"/>
    <property type="project" value="InterPro"/>
</dbReference>
<dbReference type="FunFam" id="3.80.10.10:FF:000475">
    <property type="entry name" value="Predicted gene 10436"/>
    <property type="match status" value="1"/>
</dbReference>
<dbReference type="Gene3D" id="3.80.10.10">
    <property type="entry name" value="Ribonuclease Inhibitor"/>
    <property type="match status" value="1"/>
</dbReference>
<dbReference type="InterPro" id="IPR032675">
    <property type="entry name" value="LRR_dom_sf"/>
</dbReference>
<dbReference type="InterPro" id="IPR026271">
    <property type="entry name" value="PRAME"/>
</dbReference>
<dbReference type="InterPro" id="IPR050694">
    <property type="entry name" value="PRAME_domain"/>
</dbReference>
<dbReference type="PANTHER" id="PTHR14224:SF22">
    <property type="entry name" value="OOG4 PROTEIN-RELATED"/>
    <property type="match status" value="1"/>
</dbReference>
<dbReference type="PANTHER" id="PTHR14224">
    <property type="entry name" value="SIMILAR TO PREFERENTIALLY EXPRESSED ANTIGEN IN MELANOMA-LIKE 3"/>
    <property type="match status" value="1"/>
</dbReference>
<dbReference type="PIRSF" id="PIRSF038286">
    <property type="entry name" value="PRAME"/>
    <property type="match status" value="1"/>
</dbReference>
<dbReference type="SUPFAM" id="SSF52047">
    <property type="entry name" value="RNI-like"/>
    <property type="match status" value="1"/>
</dbReference>
<organism>
    <name type="scientific">Mus musculus</name>
    <name type="common">Mouse</name>
    <dbReference type="NCBI Taxonomy" id="10090"/>
    <lineage>
        <taxon>Eukaryota</taxon>
        <taxon>Metazoa</taxon>
        <taxon>Chordata</taxon>
        <taxon>Craniata</taxon>
        <taxon>Vertebrata</taxon>
        <taxon>Euteleostomi</taxon>
        <taxon>Mammalia</taxon>
        <taxon>Eutheria</taxon>
        <taxon>Euarchontoglires</taxon>
        <taxon>Glires</taxon>
        <taxon>Rodentia</taxon>
        <taxon>Myomorpha</taxon>
        <taxon>Muroidea</taxon>
        <taxon>Muridae</taxon>
        <taxon>Murinae</taxon>
        <taxon>Mus</taxon>
        <taxon>Mus</taxon>
    </lineage>
</organism>
<accession>Q3UWY1</accession>
<accession>Q7TPT9</accession>
<sequence length="500" mass="57407">MMICHQCLDQDDSSEEEEAVSVYSPSTLVKLARQRLLREEALVISALKGLPNMLFPVIFEEAFINGHTKILKAMIPMWPFPYLSVGALTNNCNLKTLKAVLDGLDILLAQKVRSSRCKLRVLKWRDEQHDFCGIWPGSHEAEDLPELMTQKHPVQNNPDCGVKKELRVTTELSVMKGRLDDSATYLLEWAQQRKDSIHLLCRKLVIETLTKDTVIEIFKIVNADCIQELELYSLCLEDLAFLNPYLRQMDNLLELTLDHVTDSLSMGDSEMCEEEMITLVSQLPTFPCLQKLCVNDVYFIYGNLNEILRCLKKPLVSFCISNCELSQSDLDCLPYCLNIFELKCLYLIDIPLNHLCLDPLGFLLESVRHTLECLELKSCDMGEPQFNALLPALSQCSHLTDVSFWENELSLLFLKQLLQHTSKLTQLSYELYPAPLECYDDRGLILSHRLEQFCPELLDILRAKRQPKDIAFVTNPCSKCGRYYVYDPKTQRFSLEDTTL</sequence>
<gene>
    <name evidence="4" type="primary">Oog3</name>
</gene>
<keyword id="KW-0025">Alternative splicing</keyword>
<keyword id="KW-0433">Leucine-rich repeat</keyword>
<keyword id="KW-1185">Reference proteome</keyword>
<keyword id="KW-0677">Repeat</keyword>
<proteinExistence type="evidence at transcript level"/>
<evidence type="ECO:0000269" key="1">
    <source>
    </source>
</evidence>
<evidence type="ECO:0000303" key="2">
    <source>
    </source>
</evidence>
<evidence type="ECO:0000305" key="3"/>
<evidence type="ECO:0000312" key="4">
    <source>
        <dbReference type="MGI" id="MGI:2684047"/>
    </source>
</evidence>
<protein>
    <recommendedName>
        <fullName>Oogenesin-3</fullName>
    </recommendedName>
</protein>
<feature type="chain" id="PRO_0000440973" description="Oogenesin-3">
    <location>
        <begin position="1"/>
        <end position="500"/>
    </location>
</feature>
<feature type="repeat" description="LRR 1; degenerate" evidence="2">
    <location>
        <begin position="116"/>
        <end position="143"/>
    </location>
</feature>
<feature type="repeat" description="LRR 2; degenerate" evidence="2">
    <location>
        <begin position="198"/>
        <end position="222"/>
    </location>
</feature>
<feature type="repeat" description="LRR 3; degenerate" evidence="2">
    <location>
        <begin position="223"/>
        <end position="248"/>
    </location>
</feature>
<feature type="repeat" description="LRR 4; degenerate" evidence="2">
    <location>
        <begin position="249"/>
        <end position="285"/>
    </location>
</feature>
<feature type="repeat" description="LRR 5" evidence="2">
    <location>
        <begin position="286"/>
        <end position="311"/>
    </location>
</feature>
<feature type="repeat" description="LRR 6" evidence="2">
    <location>
        <begin position="312"/>
        <end position="343"/>
    </location>
</feature>
<feature type="repeat" description="LRR 7" evidence="2">
    <location>
        <begin position="344"/>
        <end position="367"/>
    </location>
</feature>
<feature type="repeat" description="LRR 8" evidence="2">
    <location>
        <begin position="368"/>
        <end position="395"/>
    </location>
</feature>
<feature type="repeat" description="LRR 9" evidence="2">
    <location>
        <begin position="396"/>
        <end position="420"/>
    </location>
</feature>
<feature type="splice variant" id="VSP_059016" description="In isoform 2.">
    <location>
        <begin position="1"/>
        <end position="52"/>
    </location>
</feature>
<comment type="alternative products">
    <event type="alternative splicing"/>
    <isoform>
        <id>Q3UWY1-1</id>
        <name>1</name>
        <sequence type="displayed"/>
    </isoform>
    <isoform>
        <id>Q3UWY1-2</id>
        <name>2</name>
        <sequence type="described" ref="VSP_059016"/>
    </isoform>
</comment>
<comment type="tissue specificity">
    <text evidence="1">Expressed in ovary, specifically in oocytes. Detected in follicles with two layers of granulosa cells, and are present in early as well as large antral follicles.</text>
</comment>
<comment type="similarity">
    <text evidence="3">Belongs to the PRAME family.</text>
</comment>